<sequence length="566" mass="63568">MKARLLILLCALSATDADTICIGYHANNSTDTVDTVLEKNVTVTHSVNLLEDSHNGKLCRLKGIAPLQLGKCNIAGWILGNPECESLLSNRSWSYIAETPNSENGTCYPGDFADYEELREQLSSVSSFERFEIFPKERSWPKHNITRGVTAACSHAKKSSFYKNLLWLTEANGSYPNLSKSYVNNKEKEVLVLWGVHHPSNIEDQRTLYRKENAYVSVVSSNYNRRFTPEIAERPKVRGQAGRMNYYWTLLEPGDKIIFEANGNLIAPWYAFALSRGLGSGIITSNASMDECDTKCQTPQGAINSSLPFQNIHPVTIGECPKYVRSTKLRMVTGLRNIPSIQSRGLFGAIAGFIEGGWTGMVDGWYGYHHQNEQGSGYAADQKSTQNAINGITNKVNSVIEKMNTQFTAVGKEFNKLEKRMENLNKKVDDGFLDIWTYNAELLVLLENERTLDFHDSNVKNLYEKVKNQLRNNAKEIGNGCFEFYHKCDNECMESVKNGTYDYPKYSEESKLNREKIDGVKLESMGVYQILAIYSTVASSLVLLVSLGAISFWMCSNGSLQCRICI</sequence>
<gene>
    <name evidence="2" type="primary">HA</name>
</gene>
<reference key="1">
    <citation type="submission" date="2007-04" db="EMBL/GenBank/DDBJ databases">
        <title>The NIAID influenza genome sequencing project.</title>
        <authorList>
            <person name="Spiro D."/>
            <person name="Sengamalay N."/>
            <person name="Boyne A."/>
            <person name="Bera J."/>
            <person name="Ghedin E."/>
            <person name="Zaborsky J."/>
            <person name="Subbu V."/>
            <person name="Sparenborg J."/>
            <person name="Gallagher T."/>
            <person name="Overton L."/>
            <person name="Althoff R."/>
            <person name="Liu X."/>
            <person name="Sitz J."/>
            <person name="Katzel D."/>
            <person name="Neupane R."/>
            <person name="Shumway M."/>
            <person name="Koo H."/>
            <person name="Griesemer S."/>
            <person name="StGeorge K."/>
            <person name="Bennett R."/>
            <person name="Taylor J."/>
            <person name="Bao Y."/>
            <person name="Bolotov P."/>
            <person name="Dernovoy D."/>
            <person name="Kiryutin B."/>
            <person name="Lipman D.J."/>
            <person name="Tatusova T."/>
        </authorList>
    </citation>
    <scope>NUCLEOTIDE SEQUENCE [GENOMIC RNA]</scope>
</reference>
<reference key="2">
    <citation type="submission" date="2007-04" db="EMBL/GenBank/DDBJ databases">
        <authorList>
            <consortium name="The NIAID Influenza Genome Sequencing Consortium"/>
        </authorList>
    </citation>
    <scope>NUCLEOTIDE SEQUENCE [GENOMIC RNA]</scope>
</reference>
<protein>
    <recommendedName>
        <fullName evidence="2">Hemagglutinin</fullName>
    </recommendedName>
    <component>
        <recommendedName>
            <fullName evidence="2">Hemagglutinin HA1 chain</fullName>
        </recommendedName>
    </component>
    <component>
        <recommendedName>
            <fullName evidence="2">Hemagglutinin HA2 chain</fullName>
        </recommendedName>
    </component>
</protein>
<evidence type="ECO:0000250" key="1">
    <source>
        <dbReference type="UniProtKB" id="Q289M7"/>
    </source>
</evidence>
<evidence type="ECO:0000255" key="2">
    <source>
        <dbReference type="HAMAP-Rule" id="MF_04072"/>
    </source>
</evidence>
<evidence type="ECO:0000305" key="3"/>
<dbReference type="EMBL" id="CY021821">
    <property type="protein sequence ID" value="ABP49481.1"/>
    <property type="molecule type" value="Viral_cRNA"/>
</dbReference>
<dbReference type="SMR" id="A4U7A6"/>
<dbReference type="GlyCosmos" id="A4U7A6">
    <property type="glycosylation" value="11 sites, No reported glycans"/>
</dbReference>
<dbReference type="PRO" id="PR:A4U7A6"/>
<dbReference type="Proteomes" id="UP000007556">
    <property type="component" value="Genome"/>
</dbReference>
<dbReference type="GO" id="GO:0020002">
    <property type="term" value="C:host cell plasma membrane"/>
    <property type="evidence" value="ECO:0007669"/>
    <property type="project" value="UniProtKB-SubCell"/>
</dbReference>
<dbReference type="GO" id="GO:0016020">
    <property type="term" value="C:membrane"/>
    <property type="evidence" value="ECO:0007669"/>
    <property type="project" value="UniProtKB-UniRule"/>
</dbReference>
<dbReference type="GO" id="GO:0019031">
    <property type="term" value="C:viral envelope"/>
    <property type="evidence" value="ECO:0007669"/>
    <property type="project" value="UniProtKB-UniRule"/>
</dbReference>
<dbReference type="GO" id="GO:0055036">
    <property type="term" value="C:virion membrane"/>
    <property type="evidence" value="ECO:0007669"/>
    <property type="project" value="UniProtKB-SubCell"/>
</dbReference>
<dbReference type="GO" id="GO:0046789">
    <property type="term" value="F:host cell surface receptor binding"/>
    <property type="evidence" value="ECO:0007669"/>
    <property type="project" value="UniProtKB-UniRule"/>
</dbReference>
<dbReference type="GO" id="GO:0075512">
    <property type="term" value="P:clathrin-dependent endocytosis of virus by host cell"/>
    <property type="evidence" value="ECO:0007669"/>
    <property type="project" value="UniProtKB-UniRule"/>
</dbReference>
<dbReference type="GO" id="GO:0039654">
    <property type="term" value="P:fusion of virus membrane with host endosome membrane"/>
    <property type="evidence" value="ECO:0007669"/>
    <property type="project" value="UniProtKB-UniRule"/>
</dbReference>
<dbReference type="GO" id="GO:0019064">
    <property type="term" value="P:fusion of virus membrane with host plasma membrane"/>
    <property type="evidence" value="ECO:0007669"/>
    <property type="project" value="InterPro"/>
</dbReference>
<dbReference type="GO" id="GO:0046761">
    <property type="term" value="P:viral budding from plasma membrane"/>
    <property type="evidence" value="ECO:0007669"/>
    <property type="project" value="UniProtKB-UniRule"/>
</dbReference>
<dbReference type="GO" id="GO:0019062">
    <property type="term" value="P:virion attachment to host cell"/>
    <property type="evidence" value="ECO:0007669"/>
    <property type="project" value="UniProtKB-KW"/>
</dbReference>
<dbReference type="FunFam" id="3.90.20.10:FF:000002">
    <property type="entry name" value="Hemagglutinin"/>
    <property type="match status" value="1"/>
</dbReference>
<dbReference type="Gene3D" id="3.90.20.10">
    <property type="match status" value="1"/>
</dbReference>
<dbReference type="Gene3D" id="3.90.209.20">
    <property type="match status" value="1"/>
</dbReference>
<dbReference type="Gene3D" id="2.10.77.10">
    <property type="entry name" value="Hemagglutinin Chain A, Domain 2"/>
    <property type="match status" value="1"/>
</dbReference>
<dbReference type="HAMAP" id="MF_04072">
    <property type="entry name" value="INFV_HEMA"/>
    <property type="match status" value="1"/>
</dbReference>
<dbReference type="InterPro" id="IPR008980">
    <property type="entry name" value="Capsid_hemagglutn"/>
</dbReference>
<dbReference type="InterPro" id="IPR013828">
    <property type="entry name" value="Hemagglutn_HA1_a/b_dom_sf"/>
</dbReference>
<dbReference type="InterPro" id="IPR000149">
    <property type="entry name" value="Hemagglutn_influenz_A"/>
</dbReference>
<dbReference type="InterPro" id="IPR001364">
    <property type="entry name" value="Hemagglutn_influenz_A/B"/>
</dbReference>
<dbReference type="Pfam" id="PF00509">
    <property type="entry name" value="Hemagglutinin"/>
    <property type="match status" value="1"/>
</dbReference>
<dbReference type="PRINTS" id="PR00330">
    <property type="entry name" value="HEMAGGLUTN1"/>
</dbReference>
<dbReference type="PRINTS" id="PR00329">
    <property type="entry name" value="HEMAGGLUTN12"/>
</dbReference>
<dbReference type="SUPFAM" id="SSF58064">
    <property type="entry name" value="Influenza hemagglutinin (stalk)"/>
    <property type="match status" value="1"/>
</dbReference>
<dbReference type="SUPFAM" id="SSF49818">
    <property type="entry name" value="Viral protein domain"/>
    <property type="match status" value="1"/>
</dbReference>
<organism>
    <name type="scientific">Influenza A virus (strain A/USA:Albany/12/1951 H1N1)</name>
    <dbReference type="NCBI Taxonomy" id="425580"/>
    <lineage>
        <taxon>Viruses</taxon>
        <taxon>Riboviria</taxon>
        <taxon>Orthornavirae</taxon>
        <taxon>Negarnaviricota</taxon>
        <taxon>Polyploviricotina</taxon>
        <taxon>Insthoviricetes</taxon>
        <taxon>Articulavirales</taxon>
        <taxon>Orthomyxoviridae</taxon>
        <taxon>Alphainfluenzavirus</taxon>
        <taxon>Alphainfluenzavirus influenzae</taxon>
        <taxon>Influenza A virus</taxon>
    </lineage>
</organism>
<keyword id="KW-1167">Clathrin- and caveolin-independent endocytosis of virus by host</keyword>
<keyword id="KW-1165">Clathrin-mediated endocytosis of virus by host</keyword>
<keyword id="KW-1015">Disulfide bond</keyword>
<keyword id="KW-1170">Fusion of virus membrane with host endosomal membrane</keyword>
<keyword id="KW-1168">Fusion of virus membrane with host membrane</keyword>
<keyword id="KW-0325">Glycoprotein</keyword>
<keyword id="KW-0348">Hemagglutinin</keyword>
<keyword id="KW-1032">Host cell membrane</keyword>
<keyword id="KW-1043">Host membrane</keyword>
<keyword id="KW-0945">Host-virus interaction</keyword>
<keyword id="KW-0449">Lipoprotein</keyword>
<keyword id="KW-0472">Membrane</keyword>
<keyword id="KW-0564">Palmitate</keyword>
<keyword id="KW-0732">Signal</keyword>
<keyword id="KW-0812">Transmembrane</keyword>
<keyword id="KW-1133">Transmembrane helix</keyword>
<keyword id="KW-1161">Viral attachment to host cell</keyword>
<keyword id="KW-0261">Viral envelope protein</keyword>
<keyword id="KW-1162">Viral penetration into host cytoplasm</keyword>
<keyword id="KW-0946">Virion</keyword>
<keyword id="KW-1164">Virus endocytosis by host</keyword>
<keyword id="KW-1160">Virus entry into host cell</keyword>
<proteinExistence type="inferred from homology"/>
<feature type="signal peptide" evidence="2">
    <location>
        <begin position="1"/>
        <end position="17"/>
    </location>
</feature>
<feature type="chain" id="PRO_0000440385" description="Hemagglutinin" evidence="2">
    <location>
        <begin position="18"/>
        <end position="566"/>
    </location>
</feature>
<feature type="chain" id="PRO_0000372883" description="Hemagglutinin HA1 chain" evidence="2">
    <location>
        <begin position="18"/>
        <end position="343"/>
    </location>
</feature>
<feature type="chain" id="PRO_0000372884" description="Hemagglutinin HA2 chain" evidence="2">
    <location>
        <begin position="345"/>
        <end position="566"/>
    </location>
</feature>
<feature type="topological domain" description="Extracellular" evidence="2">
    <location>
        <begin position="18"/>
        <end position="529"/>
    </location>
</feature>
<feature type="transmembrane region" description="Helical" evidence="2">
    <location>
        <begin position="530"/>
        <end position="550"/>
    </location>
</feature>
<feature type="topological domain" description="Cytoplasmic" evidence="2">
    <location>
        <begin position="551"/>
        <end position="566"/>
    </location>
</feature>
<feature type="site" description="Cleavage; by host" evidence="2">
    <location>
        <begin position="344"/>
        <end position="345"/>
    </location>
</feature>
<feature type="lipid moiety-binding region" description="S-palmitoyl cysteine; by host" evidence="2">
    <location>
        <position position="555"/>
    </location>
</feature>
<feature type="lipid moiety-binding region" description="S-palmitoyl cysteine; by host" evidence="2">
    <location>
        <position position="562"/>
    </location>
</feature>
<feature type="lipid moiety-binding region" description="S-palmitoyl cysteine; by host" evidence="2">
    <location>
        <position position="565"/>
    </location>
</feature>
<feature type="glycosylation site" description="N-linked (GlcNAc...) asparagine; by host" evidence="2">
    <location>
        <position position="27"/>
    </location>
</feature>
<feature type="glycosylation site" description="N-linked (GlcNAc...) asparagine; by host" evidence="2">
    <location>
        <position position="28"/>
    </location>
</feature>
<feature type="glycosylation site" description="N-linked (GlcNAc...) asparagine; by host" evidence="2">
    <location>
        <position position="40"/>
    </location>
</feature>
<feature type="glycosylation site" description="N-linked (GlcNAc...) asparagine; by host" evidence="2">
    <location>
        <position position="90"/>
    </location>
</feature>
<feature type="glycosylation site" description="N-linked (GlcNAc...) asparagine; by host" evidence="2">
    <location>
        <position position="104"/>
    </location>
</feature>
<feature type="glycosylation site" description="N-linked (GlcNAc...) asparagine; by host" evidence="2">
    <location>
        <position position="144"/>
    </location>
</feature>
<feature type="glycosylation site" description="N-linked (GlcNAc...) asparagine; by host" evidence="2">
    <location>
        <position position="172"/>
    </location>
</feature>
<feature type="glycosylation site" description="N-linked (GlcNAc...) asparagine; by host" evidence="2">
    <location>
        <position position="177"/>
    </location>
</feature>
<feature type="glycosylation site" description="N-linked (GlcNAc...) asparagine; by host" evidence="2">
    <location>
        <position position="286"/>
    </location>
</feature>
<feature type="glycosylation site" description="N-linked (GlcNAc...) asparagine; by host" evidence="2">
    <location>
        <position position="304"/>
    </location>
</feature>
<feature type="glycosylation site" description="N-linked (GlcNAc...) asparagine; by host" evidence="2">
    <location>
        <position position="498"/>
    </location>
</feature>
<feature type="disulfide bond" description="Interchain (between HA1 and HA2 chains)" evidence="2">
    <location>
        <begin position="21"/>
        <end position="481"/>
    </location>
</feature>
<feature type="disulfide bond" evidence="2">
    <location>
        <begin position="59"/>
        <end position="292"/>
    </location>
</feature>
<feature type="disulfide bond" evidence="2">
    <location>
        <begin position="72"/>
        <end position="84"/>
    </location>
</feature>
<feature type="disulfide bond" evidence="2">
    <location>
        <begin position="107"/>
        <end position="153"/>
    </location>
</feature>
<feature type="disulfide bond" evidence="2">
    <location>
        <begin position="296"/>
        <end position="320"/>
    </location>
</feature>
<feature type="disulfide bond" evidence="2">
    <location>
        <begin position="488"/>
        <end position="492"/>
    </location>
</feature>
<comment type="function">
    <text evidence="2">Binds to sialic acid-containing receptors on the cell surface, bringing about the attachment of the virus particle to the cell. This attachment induces virion internalization either through clathrin-dependent endocytosis or through clathrin- and caveolin-independent pathway. Plays a major role in the determination of host range restriction and virulence. Class I viral fusion protein. Responsible for penetration of the virus into the cell cytoplasm by mediating the fusion of the membrane of the endocytosed virus particle with the endosomal membrane. Low pH in endosomes induces an irreversible conformational change in HA2, releasing the fusion hydrophobic peptide. Several trimers are required to form a competent fusion pore.</text>
</comment>
<comment type="subunit">
    <text evidence="1">Homotrimer of disulfide-linked HA1-HA2. Interacts with human CACNA1C.</text>
</comment>
<comment type="subcellular location">
    <subcellularLocation>
        <location evidence="2">Virion membrane</location>
        <topology evidence="2">Single-pass type I membrane protein</topology>
    </subcellularLocation>
    <subcellularLocation>
        <location evidence="2">Host apical cell membrane</location>
        <topology evidence="2">Single-pass type I membrane protein</topology>
    </subcellularLocation>
    <text evidence="2">Targeted to the apical plasma membrane in epithelial polarized cells through a signal present in the transmembrane domain. Associated with glycosphingolipid- and cholesterol-enriched detergent-resistant lipid rafts.</text>
</comment>
<comment type="PTM">
    <text evidence="2">Palmitoylated.</text>
</comment>
<comment type="PTM">
    <text evidence="2">In natural infection, inactive HA is matured into HA1 and HA2 outside the cell by one or more trypsin-like, arginine-specific endoprotease secreted by the bronchial epithelial cells. One identified protease that may be involved in this process is secreted in lungs by club cells.</text>
</comment>
<comment type="miscellaneous">
    <text>Major glycoprotein, comprises over 80% of the envelope proteins present in virus particle.</text>
</comment>
<comment type="miscellaneous">
    <text>The extent of infection into host organism is determined by HA. Influenza viruses bud from the apical surface of polarized epithelial cells (e.g. bronchial epithelial cells) into lumen of lungs and are therefore usually pneumotropic. The reason is that HA is cleaved by tryptase clara which is restricted to lungs. However, HAs of H5 and H7 pantropic avian viruses subtypes can be cleaved by furin and subtilisin-type enzymes, allowing the virus to grow in other organs than lungs.</text>
</comment>
<comment type="miscellaneous">
    <text evidence="3">The influenza A genome consist of 8 RNA segments. Genetic variation of hemagglutinin and/or neuraminidase genes results in the emergence of new influenza strains. The mechanism of variation can be the result of point mutations or the result of genetic reassortment between segments of two different strains.</text>
</comment>
<comment type="similarity">
    <text evidence="2">Belongs to the influenza viruses hemagglutinin family.</text>
</comment>
<name>HEMA_I51A0</name>
<organismHost>
    <name type="scientific">Aves</name>
    <dbReference type="NCBI Taxonomy" id="8782"/>
</organismHost>
<organismHost>
    <name type="scientific">Homo sapiens</name>
    <name type="common">Human</name>
    <dbReference type="NCBI Taxonomy" id="9606"/>
</organismHost>
<organismHost>
    <name type="scientific">Sus scrofa</name>
    <name type="common">Pig</name>
    <dbReference type="NCBI Taxonomy" id="9823"/>
</organismHost>
<accession>A4U7A6</accession>